<evidence type="ECO:0000255" key="1">
    <source>
        <dbReference type="HAMAP-Rule" id="MF_00435"/>
    </source>
</evidence>
<evidence type="ECO:0000255" key="2">
    <source>
        <dbReference type="PROSITE-ProRule" id="PRU01197"/>
    </source>
</evidence>
<evidence type="ECO:0000255" key="3">
    <source>
        <dbReference type="PROSITE-ProRule" id="PRU01198"/>
    </source>
</evidence>
<feature type="chain" id="PRO_1000190938" description="Ketol-acid reductoisomerase (NADP(+))">
    <location>
        <begin position="1"/>
        <end position="337"/>
    </location>
</feature>
<feature type="domain" description="KARI N-terminal Rossmann" evidence="2">
    <location>
        <begin position="3"/>
        <end position="183"/>
    </location>
</feature>
<feature type="domain" description="KARI C-terminal knotted" evidence="3">
    <location>
        <begin position="184"/>
        <end position="329"/>
    </location>
</feature>
<feature type="active site" evidence="1">
    <location>
        <position position="109"/>
    </location>
</feature>
<feature type="binding site" evidence="1">
    <location>
        <begin position="26"/>
        <end position="29"/>
    </location>
    <ligand>
        <name>NADP(+)</name>
        <dbReference type="ChEBI" id="CHEBI:58349"/>
    </ligand>
</feature>
<feature type="binding site" evidence="1">
    <location>
        <position position="49"/>
    </location>
    <ligand>
        <name>NADP(+)</name>
        <dbReference type="ChEBI" id="CHEBI:58349"/>
    </ligand>
</feature>
<feature type="binding site" evidence="1">
    <location>
        <position position="52"/>
    </location>
    <ligand>
        <name>NADP(+)</name>
        <dbReference type="ChEBI" id="CHEBI:58349"/>
    </ligand>
</feature>
<feature type="binding site" evidence="1">
    <location>
        <position position="54"/>
    </location>
    <ligand>
        <name>NADP(+)</name>
        <dbReference type="ChEBI" id="CHEBI:58349"/>
    </ligand>
</feature>
<feature type="binding site" evidence="1">
    <location>
        <begin position="84"/>
        <end position="87"/>
    </location>
    <ligand>
        <name>NADP(+)</name>
        <dbReference type="ChEBI" id="CHEBI:58349"/>
    </ligand>
</feature>
<feature type="binding site" evidence="1">
    <location>
        <position position="135"/>
    </location>
    <ligand>
        <name>NADP(+)</name>
        <dbReference type="ChEBI" id="CHEBI:58349"/>
    </ligand>
</feature>
<feature type="binding site" evidence="1">
    <location>
        <position position="192"/>
    </location>
    <ligand>
        <name>Mg(2+)</name>
        <dbReference type="ChEBI" id="CHEBI:18420"/>
        <label>1</label>
    </ligand>
</feature>
<feature type="binding site" evidence="1">
    <location>
        <position position="192"/>
    </location>
    <ligand>
        <name>Mg(2+)</name>
        <dbReference type="ChEBI" id="CHEBI:18420"/>
        <label>2</label>
    </ligand>
</feature>
<feature type="binding site" evidence="1">
    <location>
        <position position="196"/>
    </location>
    <ligand>
        <name>Mg(2+)</name>
        <dbReference type="ChEBI" id="CHEBI:18420"/>
        <label>1</label>
    </ligand>
</feature>
<feature type="binding site" evidence="1">
    <location>
        <position position="228"/>
    </location>
    <ligand>
        <name>Mg(2+)</name>
        <dbReference type="ChEBI" id="CHEBI:18420"/>
        <label>2</label>
    </ligand>
</feature>
<feature type="binding site" evidence="1">
    <location>
        <position position="232"/>
    </location>
    <ligand>
        <name>Mg(2+)</name>
        <dbReference type="ChEBI" id="CHEBI:18420"/>
        <label>2</label>
    </ligand>
</feature>
<feature type="binding site" evidence="1">
    <location>
        <position position="253"/>
    </location>
    <ligand>
        <name>substrate</name>
    </ligand>
</feature>
<proteinExistence type="inferred from homology"/>
<reference key="1">
    <citation type="journal article" date="2008" name="J. Biotechnol.">
        <title>The lifestyle of Corynebacterium urealyticum derived from its complete genome sequence established by pyrosequencing.</title>
        <authorList>
            <person name="Tauch A."/>
            <person name="Trost E."/>
            <person name="Tilker A."/>
            <person name="Ludewig U."/>
            <person name="Schneiker S."/>
            <person name="Goesmann A."/>
            <person name="Arnold W."/>
            <person name="Bekel T."/>
            <person name="Brinkrolf K."/>
            <person name="Brune I."/>
            <person name="Goetker S."/>
            <person name="Kalinowski J."/>
            <person name="Kamp P.-B."/>
            <person name="Lobo F.P."/>
            <person name="Viehoever P."/>
            <person name="Weisshaar B."/>
            <person name="Soriano F."/>
            <person name="Droege M."/>
            <person name="Puehler A."/>
        </authorList>
    </citation>
    <scope>NUCLEOTIDE SEQUENCE [LARGE SCALE GENOMIC DNA]</scope>
    <source>
        <strain>ATCC 43042 / DSM 7109</strain>
    </source>
</reference>
<dbReference type="EC" id="1.1.1.86" evidence="1"/>
<dbReference type="EMBL" id="AM942444">
    <property type="protein sequence ID" value="CAQ04715.1"/>
    <property type="molecule type" value="Genomic_DNA"/>
</dbReference>
<dbReference type="RefSeq" id="WP_012360004.1">
    <property type="nucleotide sequence ID" value="NC_010545.1"/>
</dbReference>
<dbReference type="SMR" id="B1VG26"/>
<dbReference type="STRING" id="504474.cu0755"/>
<dbReference type="GeneID" id="60603530"/>
<dbReference type="KEGG" id="cur:cu0755"/>
<dbReference type="eggNOG" id="COG0059">
    <property type="taxonomic scope" value="Bacteria"/>
</dbReference>
<dbReference type="HOGENOM" id="CLU_033821_0_1_11"/>
<dbReference type="UniPathway" id="UPA00047">
    <property type="reaction ID" value="UER00056"/>
</dbReference>
<dbReference type="UniPathway" id="UPA00049">
    <property type="reaction ID" value="UER00060"/>
</dbReference>
<dbReference type="Proteomes" id="UP000001727">
    <property type="component" value="Chromosome"/>
</dbReference>
<dbReference type="GO" id="GO:0005829">
    <property type="term" value="C:cytosol"/>
    <property type="evidence" value="ECO:0007669"/>
    <property type="project" value="TreeGrafter"/>
</dbReference>
<dbReference type="GO" id="GO:0004455">
    <property type="term" value="F:ketol-acid reductoisomerase activity"/>
    <property type="evidence" value="ECO:0007669"/>
    <property type="project" value="UniProtKB-UniRule"/>
</dbReference>
<dbReference type="GO" id="GO:0000287">
    <property type="term" value="F:magnesium ion binding"/>
    <property type="evidence" value="ECO:0007669"/>
    <property type="project" value="UniProtKB-UniRule"/>
</dbReference>
<dbReference type="GO" id="GO:0050661">
    <property type="term" value="F:NADP binding"/>
    <property type="evidence" value="ECO:0007669"/>
    <property type="project" value="InterPro"/>
</dbReference>
<dbReference type="GO" id="GO:0009097">
    <property type="term" value="P:isoleucine biosynthetic process"/>
    <property type="evidence" value="ECO:0007669"/>
    <property type="project" value="UniProtKB-UniRule"/>
</dbReference>
<dbReference type="GO" id="GO:0009099">
    <property type="term" value="P:L-valine biosynthetic process"/>
    <property type="evidence" value="ECO:0007669"/>
    <property type="project" value="UniProtKB-UniRule"/>
</dbReference>
<dbReference type="FunFam" id="3.40.50.720:FF:000023">
    <property type="entry name" value="Ketol-acid reductoisomerase (NADP(+))"/>
    <property type="match status" value="1"/>
</dbReference>
<dbReference type="Gene3D" id="6.10.240.10">
    <property type="match status" value="1"/>
</dbReference>
<dbReference type="Gene3D" id="3.40.50.720">
    <property type="entry name" value="NAD(P)-binding Rossmann-like Domain"/>
    <property type="match status" value="1"/>
</dbReference>
<dbReference type="HAMAP" id="MF_00435">
    <property type="entry name" value="IlvC"/>
    <property type="match status" value="1"/>
</dbReference>
<dbReference type="InterPro" id="IPR008927">
    <property type="entry name" value="6-PGluconate_DH-like_C_sf"/>
</dbReference>
<dbReference type="InterPro" id="IPR013023">
    <property type="entry name" value="KARI"/>
</dbReference>
<dbReference type="InterPro" id="IPR000506">
    <property type="entry name" value="KARI_C"/>
</dbReference>
<dbReference type="InterPro" id="IPR013116">
    <property type="entry name" value="KARI_N"/>
</dbReference>
<dbReference type="InterPro" id="IPR014359">
    <property type="entry name" value="KARI_prok"/>
</dbReference>
<dbReference type="InterPro" id="IPR036291">
    <property type="entry name" value="NAD(P)-bd_dom_sf"/>
</dbReference>
<dbReference type="NCBIfam" id="TIGR00465">
    <property type="entry name" value="ilvC"/>
    <property type="match status" value="1"/>
</dbReference>
<dbReference type="NCBIfam" id="NF004017">
    <property type="entry name" value="PRK05479.1"/>
    <property type="match status" value="1"/>
</dbReference>
<dbReference type="NCBIfam" id="NF009940">
    <property type="entry name" value="PRK13403.1"/>
    <property type="match status" value="1"/>
</dbReference>
<dbReference type="PANTHER" id="PTHR21371">
    <property type="entry name" value="KETOL-ACID REDUCTOISOMERASE, MITOCHONDRIAL"/>
    <property type="match status" value="1"/>
</dbReference>
<dbReference type="PANTHER" id="PTHR21371:SF1">
    <property type="entry name" value="KETOL-ACID REDUCTOISOMERASE, MITOCHONDRIAL"/>
    <property type="match status" value="1"/>
</dbReference>
<dbReference type="Pfam" id="PF01450">
    <property type="entry name" value="KARI_C"/>
    <property type="match status" value="1"/>
</dbReference>
<dbReference type="Pfam" id="PF07991">
    <property type="entry name" value="KARI_N"/>
    <property type="match status" value="1"/>
</dbReference>
<dbReference type="PIRSF" id="PIRSF000116">
    <property type="entry name" value="IlvC_gammaproteo"/>
    <property type="match status" value="1"/>
</dbReference>
<dbReference type="SUPFAM" id="SSF48179">
    <property type="entry name" value="6-phosphogluconate dehydrogenase C-terminal domain-like"/>
    <property type="match status" value="1"/>
</dbReference>
<dbReference type="SUPFAM" id="SSF51735">
    <property type="entry name" value="NAD(P)-binding Rossmann-fold domains"/>
    <property type="match status" value="1"/>
</dbReference>
<dbReference type="PROSITE" id="PS51851">
    <property type="entry name" value="KARI_C"/>
    <property type="match status" value="1"/>
</dbReference>
<dbReference type="PROSITE" id="PS51850">
    <property type="entry name" value="KARI_N"/>
    <property type="match status" value="1"/>
</dbReference>
<organism>
    <name type="scientific">Corynebacterium urealyticum (strain ATCC 43042 / DSM 7109)</name>
    <dbReference type="NCBI Taxonomy" id="504474"/>
    <lineage>
        <taxon>Bacteria</taxon>
        <taxon>Bacillati</taxon>
        <taxon>Actinomycetota</taxon>
        <taxon>Actinomycetes</taxon>
        <taxon>Mycobacteriales</taxon>
        <taxon>Corynebacteriaceae</taxon>
        <taxon>Corynebacterium</taxon>
    </lineage>
</organism>
<accession>B1VG26</accession>
<comment type="function">
    <text evidence="1">Involved in the biosynthesis of branched-chain amino acids (BCAA). Catalyzes an alkyl-migration followed by a ketol-acid reduction of (S)-2-acetolactate (S2AL) to yield (R)-2,3-dihydroxy-isovalerate. In the isomerase reaction, S2AL is rearranged via a Mg-dependent methyl migration to produce 3-hydroxy-3-methyl-2-ketobutyrate (HMKB). In the reductase reaction, this 2-ketoacid undergoes a metal-dependent reduction by NADPH to yield (R)-2,3-dihydroxy-isovalerate.</text>
</comment>
<comment type="catalytic activity">
    <reaction evidence="1">
        <text>(2R)-2,3-dihydroxy-3-methylbutanoate + NADP(+) = (2S)-2-acetolactate + NADPH + H(+)</text>
        <dbReference type="Rhea" id="RHEA:22068"/>
        <dbReference type="ChEBI" id="CHEBI:15378"/>
        <dbReference type="ChEBI" id="CHEBI:49072"/>
        <dbReference type="ChEBI" id="CHEBI:57783"/>
        <dbReference type="ChEBI" id="CHEBI:58349"/>
        <dbReference type="ChEBI" id="CHEBI:58476"/>
        <dbReference type="EC" id="1.1.1.86"/>
    </reaction>
</comment>
<comment type="catalytic activity">
    <reaction evidence="1">
        <text>(2R,3R)-2,3-dihydroxy-3-methylpentanoate + NADP(+) = (S)-2-ethyl-2-hydroxy-3-oxobutanoate + NADPH + H(+)</text>
        <dbReference type="Rhea" id="RHEA:13493"/>
        <dbReference type="ChEBI" id="CHEBI:15378"/>
        <dbReference type="ChEBI" id="CHEBI:49256"/>
        <dbReference type="ChEBI" id="CHEBI:49258"/>
        <dbReference type="ChEBI" id="CHEBI:57783"/>
        <dbReference type="ChEBI" id="CHEBI:58349"/>
        <dbReference type="EC" id="1.1.1.86"/>
    </reaction>
</comment>
<comment type="cofactor">
    <cofactor evidence="1">
        <name>Mg(2+)</name>
        <dbReference type="ChEBI" id="CHEBI:18420"/>
    </cofactor>
    <text evidence="1">Binds 2 magnesium ions per subunit.</text>
</comment>
<comment type="pathway">
    <text evidence="1">Amino-acid biosynthesis; L-isoleucine biosynthesis; L-isoleucine from 2-oxobutanoate: step 2/4.</text>
</comment>
<comment type="pathway">
    <text evidence="1">Amino-acid biosynthesis; L-valine biosynthesis; L-valine from pyruvate: step 2/4.</text>
</comment>
<comment type="similarity">
    <text evidence="1">Belongs to the ketol-acid reductoisomerase family.</text>
</comment>
<keyword id="KW-0028">Amino-acid biosynthesis</keyword>
<keyword id="KW-0100">Branched-chain amino acid biosynthesis</keyword>
<keyword id="KW-0460">Magnesium</keyword>
<keyword id="KW-0479">Metal-binding</keyword>
<keyword id="KW-0521">NADP</keyword>
<keyword id="KW-0560">Oxidoreductase</keyword>
<keyword id="KW-1185">Reference proteome</keyword>
<name>ILVC_CORU7</name>
<gene>
    <name evidence="1" type="primary">ilvC</name>
    <name type="ordered locus">cu0755</name>
</gene>
<protein>
    <recommendedName>
        <fullName evidence="1">Ketol-acid reductoisomerase (NADP(+))</fullName>
        <shortName evidence="1">KARI</shortName>
        <ecNumber evidence="1">1.1.1.86</ecNumber>
    </recommendedName>
    <alternativeName>
        <fullName evidence="1">Acetohydroxy-acid isomeroreductase</fullName>
        <shortName evidence="1">AHIR</shortName>
    </alternativeName>
    <alternativeName>
        <fullName evidence="1">Alpha-keto-beta-hydroxylacyl reductoisomerase</fullName>
    </alternativeName>
    <alternativeName>
        <fullName evidence="1">Ketol-acid reductoisomerase type 1</fullName>
    </alternativeName>
    <alternativeName>
        <fullName evidence="1">Ketol-acid reductoisomerase type I</fullName>
    </alternativeName>
</protein>
<sequence length="337" mass="36598">MAIDVFYDDDADLSIIQGRKVAIIGYGSQGHAHAQNLRESGVEVAIGLREGSKSREKAEEAGFKVLNNAEASEWADVIMLLAPDTSQAQIYENDIAPNLKDGDALFFGHGLNIHFGMIKPEDNITIGMVAPKGPGHLVRRQYVDGKGVPCLIAVEQDPKGNGRDLALSYAAAIGGGRAGVIPTTFEAETVTDLFGEQAVLCGGTEELIKTGFEVLVEAGYEPEMAYFECLHELKLIVDLIFEGGIKNMNYSVSDTAEFGGYISGPRVIDADTKERMKGILSDIQDGTFTKRLVANVEGGNKELEELRASYNDHEIEKTGEKLRDLMSWVKNPLNETA</sequence>